<organism>
    <name type="scientific">Buchnera aphidicola subsp. Schizaphis graminum (strain Sg)</name>
    <dbReference type="NCBI Taxonomy" id="198804"/>
    <lineage>
        <taxon>Bacteria</taxon>
        <taxon>Pseudomonadati</taxon>
        <taxon>Pseudomonadota</taxon>
        <taxon>Gammaproteobacteria</taxon>
        <taxon>Enterobacterales</taxon>
        <taxon>Erwiniaceae</taxon>
        <taxon>Buchnera</taxon>
    </lineage>
</organism>
<gene>
    <name type="primary">fliQ</name>
    <name type="ordered locus">BUsg_076</name>
</gene>
<sequence length="90" mass="9974">MTPEYVMGLFHSAMKVTLMLASPLLLSALVSGLIISILQAATQVNEQTLSFIPKIISILVVITLLGPWMLGVMLDYMHNLFYNIPSIIIR</sequence>
<accession>Q8KA36</accession>
<evidence type="ECO:0000250" key="1"/>
<evidence type="ECO:0000255" key="2"/>
<evidence type="ECO:0000305" key="3"/>
<keyword id="KW-0975">Bacterial flagellum</keyword>
<keyword id="KW-1003">Cell membrane</keyword>
<keyword id="KW-0472">Membrane</keyword>
<keyword id="KW-0812">Transmembrane</keyword>
<keyword id="KW-1133">Transmembrane helix</keyword>
<reference key="1">
    <citation type="journal article" date="2002" name="Science">
        <title>50 million years of genomic stasis in endosymbiotic bacteria.</title>
        <authorList>
            <person name="Tamas I."/>
            <person name="Klasson L."/>
            <person name="Canbaeck B."/>
            <person name="Naeslund A.K."/>
            <person name="Eriksson A.-S."/>
            <person name="Wernegreen J.J."/>
            <person name="Sandstroem J.P."/>
            <person name="Moran N.A."/>
            <person name="Andersson S.G.E."/>
        </authorList>
    </citation>
    <scope>NUCLEOTIDE SEQUENCE [LARGE SCALE GENOMIC DNA]</scope>
    <source>
        <strain>Sg</strain>
    </source>
</reference>
<comment type="function">
    <text evidence="1">Role in flagellar biosynthesis.</text>
</comment>
<comment type="subcellular location">
    <subcellularLocation>
        <location evidence="3">Cell membrane</location>
        <topology evidence="3">Multi-pass membrane protein</topology>
    </subcellularLocation>
    <subcellularLocation>
        <location evidence="1">Bacterial flagellum basal body</location>
    </subcellularLocation>
</comment>
<comment type="similarity">
    <text evidence="3">Belongs to the FliQ/MopD/SpaQ family.</text>
</comment>
<proteinExistence type="inferred from homology"/>
<name>FLIQ_BUCAP</name>
<protein>
    <recommendedName>
        <fullName>Flagellar biosynthetic protein FliQ</fullName>
    </recommendedName>
</protein>
<dbReference type="EMBL" id="AE013218">
    <property type="protein sequence ID" value="AAM67646.1"/>
    <property type="molecule type" value="Genomic_DNA"/>
</dbReference>
<dbReference type="RefSeq" id="WP_011053612.1">
    <property type="nucleotide sequence ID" value="NC_004061.1"/>
</dbReference>
<dbReference type="SMR" id="Q8KA36"/>
<dbReference type="STRING" id="198804.BUsg_076"/>
<dbReference type="GeneID" id="93003544"/>
<dbReference type="KEGG" id="bas:BUsg_076"/>
<dbReference type="eggNOG" id="COG1987">
    <property type="taxonomic scope" value="Bacteria"/>
</dbReference>
<dbReference type="HOGENOM" id="CLU_164516_2_0_6"/>
<dbReference type="Proteomes" id="UP000000416">
    <property type="component" value="Chromosome"/>
</dbReference>
<dbReference type="GO" id="GO:0009425">
    <property type="term" value="C:bacterial-type flagellum basal body"/>
    <property type="evidence" value="ECO:0007669"/>
    <property type="project" value="UniProtKB-SubCell"/>
</dbReference>
<dbReference type="GO" id="GO:0005886">
    <property type="term" value="C:plasma membrane"/>
    <property type="evidence" value="ECO:0007669"/>
    <property type="project" value="UniProtKB-SubCell"/>
</dbReference>
<dbReference type="GO" id="GO:0044780">
    <property type="term" value="P:bacterial-type flagellum assembly"/>
    <property type="evidence" value="ECO:0007669"/>
    <property type="project" value="InterPro"/>
</dbReference>
<dbReference type="GO" id="GO:0009306">
    <property type="term" value="P:protein secretion"/>
    <property type="evidence" value="ECO:0007669"/>
    <property type="project" value="InterPro"/>
</dbReference>
<dbReference type="InterPro" id="IPR002191">
    <property type="entry name" value="Bac_export_3"/>
</dbReference>
<dbReference type="InterPro" id="IPR006305">
    <property type="entry name" value="FliQ"/>
</dbReference>
<dbReference type="NCBIfam" id="TIGR01402">
    <property type="entry name" value="fliQ"/>
    <property type="match status" value="1"/>
</dbReference>
<dbReference type="PANTHER" id="PTHR34040">
    <property type="entry name" value="FLAGELLAR BIOSYNTHETIC PROTEIN FLIQ"/>
    <property type="match status" value="1"/>
</dbReference>
<dbReference type="PANTHER" id="PTHR34040:SF2">
    <property type="entry name" value="FLAGELLAR BIOSYNTHETIC PROTEIN FLIQ"/>
    <property type="match status" value="1"/>
</dbReference>
<dbReference type="Pfam" id="PF01313">
    <property type="entry name" value="Bac_export_3"/>
    <property type="match status" value="1"/>
</dbReference>
<dbReference type="PIRSF" id="PIRSF004669">
    <property type="entry name" value="FliQ"/>
    <property type="match status" value="1"/>
</dbReference>
<dbReference type="PRINTS" id="PR00952">
    <property type="entry name" value="TYPE3IMQPROT"/>
</dbReference>
<feature type="chain" id="PRO_0000129090" description="Flagellar biosynthetic protein FliQ">
    <location>
        <begin position="1"/>
        <end position="90"/>
    </location>
</feature>
<feature type="transmembrane region" description="Helical" evidence="2">
    <location>
        <begin position="18"/>
        <end position="38"/>
    </location>
</feature>
<feature type="transmembrane region" description="Helical" evidence="2">
    <location>
        <begin position="55"/>
        <end position="75"/>
    </location>
</feature>